<sequence length="485" mass="53510">MMLLRAARVPVLGRRFLSQQQLISKHVQEVDPEMFRILSDERSRQKHSVTLIPSENFTSKAVMDLLGSEMQNKYSEGYPGERYYGGNQFIDKAESLCQARALDLYGLDPEKWGVNVQALSGAPANLYAYSAVMEVGDRLMGLDLPHGGHLSHGYQLPSGTKISYISKYFNTMPYHVNTETGIIDYDTLAMTSKLFRPKVIVAGTSAYSRKLDYARFRKIADGCGAYLLSDMAHISGLVAANVIDSPFEHSDIVTTTTHKSLRGPRGAMIFYRKGIKKVNKKTGKETPFTFDKTINFSVFPGHQGGPHNHTISALAVALKQAKTPEFVEYQKQVVSNAKAFGDELLKRGFELVSGGTDNHLLLLNLSNMGIDGARLEAILEKINIAANKNTIPGDKSALFPSGLRVGTPAMTTRGFQEQDFKKVAEYIDNAVKLSIALKSQESADAKDVRSKLNSFKQLCDQSEPVQKLAEEVSSWVGTFPVPGEL</sequence>
<gene>
    <name type="primary">SHM1</name>
    <name type="ordered locus">CAGL0I09284g</name>
</gene>
<proteinExistence type="inferred from homology"/>
<name>GLYM_CANGA</name>
<accession>Q6FQ44</accession>
<comment type="function">
    <text>Interconversion of serine and glycine.</text>
</comment>
<comment type="catalytic activity">
    <reaction>
        <text>(6R)-5,10-methylene-5,6,7,8-tetrahydrofolate + glycine + H2O = (6S)-5,6,7,8-tetrahydrofolate + L-serine</text>
        <dbReference type="Rhea" id="RHEA:15481"/>
        <dbReference type="ChEBI" id="CHEBI:15377"/>
        <dbReference type="ChEBI" id="CHEBI:15636"/>
        <dbReference type="ChEBI" id="CHEBI:33384"/>
        <dbReference type="ChEBI" id="CHEBI:57305"/>
        <dbReference type="ChEBI" id="CHEBI:57453"/>
        <dbReference type="EC" id="2.1.2.1"/>
    </reaction>
</comment>
<comment type="cofactor">
    <cofactor evidence="1">
        <name>pyridoxal 5'-phosphate</name>
        <dbReference type="ChEBI" id="CHEBI:597326"/>
    </cofactor>
</comment>
<comment type="pathway">
    <text>One-carbon metabolism; tetrahydrofolate interconversion.</text>
</comment>
<comment type="subunit">
    <text evidence="1">Homotetramer.</text>
</comment>
<comment type="subcellular location">
    <subcellularLocation>
        <location>Mitochondrion</location>
    </subcellularLocation>
</comment>
<comment type="miscellaneous">
    <text>In eukaryotes there are two forms of the enzymes: a cytosolic one and a mitochondrial one.</text>
</comment>
<comment type="similarity">
    <text evidence="3">Belongs to the SHMT family.</text>
</comment>
<organism>
    <name type="scientific">Candida glabrata (strain ATCC 2001 / BCRC 20586 / JCM 3761 / NBRC 0622 / NRRL Y-65 / CBS 138)</name>
    <name type="common">Yeast</name>
    <name type="synonym">Nakaseomyces glabratus</name>
    <dbReference type="NCBI Taxonomy" id="284593"/>
    <lineage>
        <taxon>Eukaryota</taxon>
        <taxon>Fungi</taxon>
        <taxon>Dikarya</taxon>
        <taxon>Ascomycota</taxon>
        <taxon>Saccharomycotina</taxon>
        <taxon>Saccharomycetes</taxon>
        <taxon>Saccharomycetales</taxon>
        <taxon>Saccharomycetaceae</taxon>
        <taxon>Nakaseomyces</taxon>
    </lineage>
</organism>
<feature type="transit peptide" description="Mitochondrion" evidence="2">
    <location>
        <begin position="1"/>
        <end status="unknown"/>
    </location>
</feature>
<feature type="chain" id="PRO_0000032566" description="Serine hydroxymethyltransferase, mitochondrial">
    <location>
        <begin status="unknown"/>
        <end position="485"/>
    </location>
</feature>
<feature type="modified residue" description="N6-(pyridoxal phosphate)lysine" evidence="1">
    <location>
        <position position="259"/>
    </location>
</feature>
<protein>
    <recommendedName>
        <fullName>Serine hydroxymethyltransferase, mitochondrial</fullName>
        <shortName>SHMT</shortName>
        <ecNumber>2.1.2.1</ecNumber>
    </recommendedName>
    <alternativeName>
        <fullName>Glycine hydroxymethyltransferase</fullName>
    </alternativeName>
    <alternativeName>
        <fullName>Serine methylase</fullName>
    </alternativeName>
</protein>
<evidence type="ECO:0000250" key="1"/>
<evidence type="ECO:0000255" key="2"/>
<evidence type="ECO:0000305" key="3"/>
<dbReference type="EC" id="2.1.2.1"/>
<dbReference type="EMBL" id="CR380955">
    <property type="protein sequence ID" value="CAG60587.1"/>
    <property type="molecule type" value="Genomic_DNA"/>
</dbReference>
<dbReference type="RefSeq" id="XP_447650.1">
    <property type="nucleotide sequence ID" value="XM_447650.1"/>
</dbReference>
<dbReference type="SMR" id="Q6FQ44"/>
<dbReference type="FunCoup" id="Q6FQ44">
    <property type="interactions" value="462"/>
</dbReference>
<dbReference type="STRING" id="284593.Q6FQ44"/>
<dbReference type="EnsemblFungi" id="CAGL0I09284g-T">
    <property type="protein sequence ID" value="CAGL0I09284g-T-p1"/>
    <property type="gene ID" value="CAGL0I09284g"/>
</dbReference>
<dbReference type="KEGG" id="cgr:2889124"/>
<dbReference type="CGD" id="CAL0132402">
    <property type="gene designation" value="SHM1"/>
</dbReference>
<dbReference type="VEuPathDB" id="FungiDB:CAGL0I09284g"/>
<dbReference type="eggNOG" id="KOG2467">
    <property type="taxonomic scope" value="Eukaryota"/>
</dbReference>
<dbReference type="HOGENOM" id="CLU_022477_0_1_1"/>
<dbReference type="InParanoid" id="Q6FQ44"/>
<dbReference type="OMA" id="ANASVMH"/>
<dbReference type="UniPathway" id="UPA00193"/>
<dbReference type="Proteomes" id="UP000002428">
    <property type="component" value="Chromosome I"/>
</dbReference>
<dbReference type="GO" id="GO:0005739">
    <property type="term" value="C:mitochondrion"/>
    <property type="evidence" value="ECO:0007669"/>
    <property type="project" value="UniProtKB-SubCell"/>
</dbReference>
<dbReference type="GO" id="GO:0004372">
    <property type="term" value="F:glycine hydroxymethyltransferase activity"/>
    <property type="evidence" value="ECO:0007669"/>
    <property type="project" value="UniProtKB-EC"/>
</dbReference>
<dbReference type="GO" id="GO:0030170">
    <property type="term" value="F:pyridoxal phosphate binding"/>
    <property type="evidence" value="ECO:0007669"/>
    <property type="project" value="InterPro"/>
</dbReference>
<dbReference type="GO" id="GO:0019264">
    <property type="term" value="P:glycine biosynthetic process from serine"/>
    <property type="evidence" value="ECO:0007669"/>
    <property type="project" value="InterPro"/>
</dbReference>
<dbReference type="GO" id="GO:0035999">
    <property type="term" value="P:tetrahydrofolate interconversion"/>
    <property type="evidence" value="ECO:0007669"/>
    <property type="project" value="UniProtKB-UniPathway"/>
</dbReference>
<dbReference type="CDD" id="cd00378">
    <property type="entry name" value="SHMT"/>
    <property type="match status" value="1"/>
</dbReference>
<dbReference type="FunFam" id="3.40.640.10:FF:000097">
    <property type="entry name" value="Serine hydroxymethyltransferase"/>
    <property type="match status" value="1"/>
</dbReference>
<dbReference type="Gene3D" id="3.90.1150.10">
    <property type="entry name" value="Aspartate Aminotransferase, domain 1"/>
    <property type="match status" value="1"/>
</dbReference>
<dbReference type="Gene3D" id="3.40.640.10">
    <property type="entry name" value="Type I PLP-dependent aspartate aminotransferase-like (Major domain)"/>
    <property type="match status" value="1"/>
</dbReference>
<dbReference type="HAMAP" id="MF_00051">
    <property type="entry name" value="SHMT"/>
    <property type="match status" value="1"/>
</dbReference>
<dbReference type="InterPro" id="IPR015424">
    <property type="entry name" value="PyrdxlP-dep_Trfase"/>
</dbReference>
<dbReference type="InterPro" id="IPR015421">
    <property type="entry name" value="PyrdxlP-dep_Trfase_major"/>
</dbReference>
<dbReference type="InterPro" id="IPR015422">
    <property type="entry name" value="PyrdxlP-dep_Trfase_small"/>
</dbReference>
<dbReference type="InterPro" id="IPR001085">
    <property type="entry name" value="Ser_HO-MeTrfase"/>
</dbReference>
<dbReference type="InterPro" id="IPR049943">
    <property type="entry name" value="Ser_HO-MeTrfase-like"/>
</dbReference>
<dbReference type="InterPro" id="IPR019798">
    <property type="entry name" value="Ser_HO-MeTrfase_PLP_BS"/>
</dbReference>
<dbReference type="InterPro" id="IPR039429">
    <property type="entry name" value="SHMT-like_dom"/>
</dbReference>
<dbReference type="NCBIfam" id="NF000586">
    <property type="entry name" value="PRK00011.1"/>
    <property type="match status" value="1"/>
</dbReference>
<dbReference type="PANTHER" id="PTHR11680">
    <property type="entry name" value="SERINE HYDROXYMETHYLTRANSFERASE"/>
    <property type="match status" value="1"/>
</dbReference>
<dbReference type="PANTHER" id="PTHR11680:SF57">
    <property type="entry name" value="SERINE HYDROXYMETHYLTRANSFERASE, MITOCHONDRIAL"/>
    <property type="match status" value="1"/>
</dbReference>
<dbReference type="Pfam" id="PF00464">
    <property type="entry name" value="SHMT"/>
    <property type="match status" value="1"/>
</dbReference>
<dbReference type="PIRSF" id="PIRSF000412">
    <property type="entry name" value="SHMT"/>
    <property type="match status" value="1"/>
</dbReference>
<dbReference type="SUPFAM" id="SSF53383">
    <property type="entry name" value="PLP-dependent transferases"/>
    <property type="match status" value="1"/>
</dbReference>
<dbReference type="PROSITE" id="PS00096">
    <property type="entry name" value="SHMT"/>
    <property type="match status" value="1"/>
</dbReference>
<reference key="1">
    <citation type="journal article" date="2004" name="Nature">
        <title>Genome evolution in yeasts.</title>
        <authorList>
            <person name="Dujon B."/>
            <person name="Sherman D."/>
            <person name="Fischer G."/>
            <person name="Durrens P."/>
            <person name="Casaregola S."/>
            <person name="Lafontaine I."/>
            <person name="de Montigny J."/>
            <person name="Marck C."/>
            <person name="Neuveglise C."/>
            <person name="Talla E."/>
            <person name="Goffard N."/>
            <person name="Frangeul L."/>
            <person name="Aigle M."/>
            <person name="Anthouard V."/>
            <person name="Babour A."/>
            <person name="Barbe V."/>
            <person name="Barnay S."/>
            <person name="Blanchin S."/>
            <person name="Beckerich J.-M."/>
            <person name="Beyne E."/>
            <person name="Bleykasten C."/>
            <person name="Boisrame A."/>
            <person name="Boyer J."/>
            <person name="Cattolico L."/>
            <person name="Confanioleri F."/>
            <person name="de Daruvar A."/>
            <person name="Despons L."/>
            <person name="Fabre E."/>
            <person name="Fairhead C."/>
            <person name="Ferry-Dumazet H."/>
            <person name="Groppi A."/>
            <person name="Hantraye F."/>
            <person name="Hennequin C."/>
            <person name="Jauniaux N."/>
            <person name="Joyet P."/>
            <person name="Kachouri R."/>
            <person name="Kerrest A."/>
            <person name="Koszul R."/>
            <person name="Lemaire M."/>
            <person name="Lesur I."/>
            <person name="Ma L."/>
            <person name="Muller H."/>
            <person name="Nicaud J.-M."/>
            <person name="Nikolski M."/>
            <person name="Oztas S."/>
            <person name="Ozier-Kalogeropoulos O."/>
            <person name="Pellenz S."/>
            <person name="Potier S."/>
            <person name="Richard G.-F."/>
            <person name="Straub M.-L."/>
            <person name="Suleau A."/>
            <person name="Swennen D."/>
            <person name="Tekaia F."/>
            <person name="Wesolowski-Louvel M."/>
            <person name="Westhof E."/>
            <person name="Wirth B."/>
            <person name="Zeniou-Meyer M."/>
            <person name="Zivanovic Y."/>
            <person name="Bolotin-Fukuhara M."/>
            <person name="Thierry A."/>
            <person name="Bouchier C."/>
            <person name="Caudron B."/>
            <person name="Scarpelli C."/>
            <person name="Gaillardin C."/>
            <person name="Weissenbach J."/>
            <person name="Wincker P."/>
            <person name="Souciet J.-L."/>
        </authorList>
    </citation>
    <scope>NUCLEOTIDE SEQUENCE [LARGE SCALE GENOMIC DNA]</scope>
    <source>
        <strain>ATCC 2001 / BCRC 20586 / JCM 3761 / NBRC 0622 / NRRL Y-65 / CBS 138</strain>
    </source>
</reference>
<keyword id="KW-0496">Mitochondrion</keyword>
<keyword id="KW-0554">One-carbon metabolism</keyword>
<keyword id="KW-0663">Pyridoxal phosphate</keyword>
<keyword id="KW-1185">Reference proteome</keyword>
<keyword id="KW-0808">Transferase</keyword>
<keyword id="KW-0809">Transit peptide</keyword>